<comment type="catalytic activity">
    <reaction>
        <text>ATP = 3',5'-cyclic AMP + diphosphate</text>
        <dbReference type="Rhea" id="RHEA:15389"/>
        <dbReference type="ChEBI" id="CHEBI:30616"/>
        <dbReference type="ChEBI" id="CHEBI:33019"/>
        <dbReference type="ChEBI" id="CHEBI:58165"/>
        <dbReference type="EC" id="4.6.1.1"/>
    </reaction>
</comment>
<comment type="similarity">
    <text evidence="2">Belongs to the adenylyl cyclase class-3 family.</text>
</comment>
<comment type="sequence caution" evidence="2">
    <conflict type="erroneous initiation">
        <sequence resource="EMBL-CDS" id="AAK65519"/>
    </conflict>
</comment>
<reference key="1">
    <citation type="journal article" date="1999" name="Mol. Gen. Genet.">
        <title>The eff-482 locus of Sinorhizobium meliloti CXM1-105 that influences symbiotic effectiveness consists of three genes encoding an endoglycanase, a transcriptional regulator and an adenylate cyclase.</title>
        <authorList>
            <person name="Sharypova L.A."/>
            <person name="Yurgel S.N."/>
            <person name="Keller M."/>
            <person name="Simarov B.V."/>
            <person name="Puehler A."/>
            <person name="Becker A."/>
        </authorList>
    </citation>
    <scope>NUCLEOTIDE SEQUENCE [GENOMIC DNA]</scope>
    <source>
        <strain>CXM1-105</strain>
    </source>
</reference>
<reference key="2">
    <citation type="journal article" date="2001" name="Proc. Natl. Acad. Sci. U.S.A.">
        <title>Nucleotide sequence and predicted functions of the entire Sinorhizobium meliloti pSymA megaplasmid.</title>
        <authorList>
            <person name="Barnett M.J."/>
            <person name="Fisher R.F."/>
            <person name="Jones T."/>
            <person name="Komp C."/>
            <person name="Abola A.P."/>
            <person name="Barloy-Hubler F."/>
            <person name="Bowser L."/>
            <person name="Capela D."/>
            <person name="Galibert F."/>
            <person name="Gouzy J."/>
            <person name="Gurjal M."/>
            <person name="Hong A."/>
            <person name="Huizar L."/>
            <person name="Hyman R.W."/>
            <person name="Kahn D."/>
            <person name="Kahn M.L."/>
            <person name="Kalman S."/>
            <person name="Keating D.H."/>
            <person name="Palm C."/>
            <person name="Peck M.C."/>
            <person name="Surzycki R."/>
            <person name="Wells D.H."/>
            <person name="Yeh K.-C."/>
            <person name="Davis R.W."/>
            <person name="Federspiel N.A."/>
            <person name="Long S.R."/>
        </authorList>
    </citation>
    <scope>NUCLEOTIDE SEQUENCE [LARGE SCALE GENOMIC DNA]</scope>
    <source>
        <strain>1021</strain>
    </source>
</reference>
<reference key="3">
    <citation type="journal article" date="2001" name="Science">
        <title>The composite genome of the legume symbiont Sinorhizobium meliloti.</title>
        <authorList>
            <person name="Galibert F."/>
            <person name="Finan T.M."/>
            <person name="Long S.R."/>
            <person name="Puehler A."/>
            <person name="Abola P."/>
            <person name="Ampe F."/>
            <person name="Barloy-Hubler F."/>
            <person name="Barnett M.J."/>
            <person name="Becker A."/>
            <person name="Boistard P."/>
            <person name="Bothe G."/>
            <person name="Boutry M."/>
            <person name="Bowser L."/>
            <person name="Buhrmester J."/>
            <person name="Cadieu E."/>
            <person name="Capela D."/>
            <person name="Chain P."/>
            <person name="Cowie A."/>
            <person name="Davis R.W."/>
            <person name="Dreano S."/>
            <person name="Federspiel N.A."/>
            <person name="Fisher R.F."/>
            <person name="Gloux S."/>
            <person name="Godrie T."/>
            <person name="Goffeau A."/>
            <person name="Golding B."/>
            <person name="Gouzy J."/>
            <person name="Gurjal M."/>
            <person name="Hernandez-Lucas I."/>
            <person name="Hong A."/>
            <person name="Huizar L."/>
            <person name="Hyman R.W."/>
            <person name="Jones T."/>
            <person name="Kahn D."/>
            <person name="Kahn M.L."/>
            <person name="Kalman S."/>
            <person name="Keating D.H."/>
            <person name="Kiss E."/>
            <person name="Komp C."/>
            <person name="Lelaure V."/>
            <person name="Masuy D."/>
            <person name="Palm C."/>
            <person name="Peck M.C."/>
            <person name="Pohl T.M."/>
            <person name="Portetelle D."/>
            <person name="Purnelle B."/>
            <person name="Ramsperger U."/>
            <person name="Surzycki R."/>
            <person name="Thebault P."/>
            <person name="Vandenbol M."/>
            <person name="Vorhoelter F.J."/>
            <person name="Weidner S."/>
            <person name="Wells D.H."/>
            <person name="Wong K."/>
            <person name="Yeh K.-C."/>
            <person name="Batut J."/>
        </authorList>
    </citation>
    <scope>NUCLEOTIDE SEQUENCE [LARGE SCALE GENOMIC DNA]</scope>
    <source>
        <strain>1021</strain>
    </source>
</reference>
<gene>
    <name type="primary">cya3</name>
    <name type="synonym">cyaF5</name>
    <name type="ordered locus">RA0861</name>
    <name type="ORF">SMa1583</name>
</gene>
<proteinExistence type="inferred from homology"/>
<dbReference type="EC" id="4.6.1.1"/>
<dbReference type="EMBL" id="AJ225896">
    <property type="protein sequence ID" value="CAB38103.1"/>
    <property type="molecule type" value="Genomic_DNA"/>
</dbReference>
<dbReference type="EMBL" id="AE006469">
    <property type="protein sequence ID" value="AAK65519.2"/>
    <property type="status" value="ALT_INIT"/>
    <property type="molecule type" value="Genomic_DNA"/>
</dbReference>
<dbReference type="PIR" id="E95369">
    <property type="entry name" value="E95369"/>
</dbReference>
<dbReference type="RefSeq" id="NP_436107.2">
    <property type="nucleotide sequence ID" value="NC_003037.1"/>
</dbReference>
<dbReference type="RefSeq" id="WP_015242161.1">
    <property type="nucleotide sequence ID" value="NC_003037.1"/>
</dbReference>
<dbReference type="SMR" id="Q9Z3Q0"/>
<dbReference type="EnsemblBacteria" id="AAK65519">
    <property type="protein sequence ID" value="AAK65519"/>
    <property type="gene ID" value="SMa1583"/>
</dbReference>
<dbReference type="KEGG" id="sme:SMa1583"/>
<dbReference type="PATRIC" id="fig|266834.11.peg.895"/>
<dbReference type="HOGENOM" id="CLU_019981_0_0_5"/>
<dbReference type="OrthoDB" id="9807521at2"/>
<dbReference type="Proteomes" id="UP000001976">
    <property type="component" value="Plasmid pSymA"/>
</dbReference>
<dbReference type="GO" id="GO:0004016">
    <property type="term" value="F:adenylate cyclase activity"/>
    <property type="evidence" value="ECO:0007669"/>
    <property type="project" value="UniProtKB-EC"/>
</dbReference>
<dbReference type="GO" id="GO:0005524">
    <property type="term" value="F:ATP binding"/>
    <property type="evidence" value="ECO:0007669"/>
    <property type="project" value="UniProtKB-KW"/>
</dbReference>
<dbReference type="GO" id="GO:0006171">
    <property type="term" value="P:cAMP biosynthetic process"/>
    <property type="evidence" value="ECO:0007669"/>
    <property type="project" value="UniProtKB-KW"/>
</dbReference>
<dbReference type="GO" id="GO:0035556">
    <property type="term" value="P:intracellular signal transduction"/>
    <property type="evidence" value="ECO:0007669"/>
    <property type="project" value="InterPro"/>
</dbReference>
<dbReference type="CDD" id="cd07302">
    <property type="entry name" value="CHD"/>
    <property type="match status" value="1"/>
</dbReference>
<dbReference type="Gene3D" id="3.30.70.1230">
    <property type="entry name" value="Nucleotide cyclase"/>
    <property type="match status" value="1"/>
</dbReference>
<dbReference type="Gene3D" id="1.25.40.10">
    <property type="entry name" value="Tetratricopeptide repeat domain"/>
    <property type="match status" value="1"/>
</dbReference>
<dbReference type="Gene3D" id="3.40.50.10070">
    <property type="entry name" value="TolB, N-terminal domain"/>
    <property type="match status" value="1"/>
</dbReference>
<dbReference type="InterPro" id="IPR001054">
    <property type="entry name" value="A/G_cyclase"/>
</dbReference>
<dbReference type="InterPro" id="IPR029787">
    <property type="entry name" value="Nucleotide_cyclase"/>
</dbReference>
<dbReference type="InterPro" id="IPR011990">
    <property type="entry name" value="TPR-like_helical_dom_sf"/>
</dbReference>
<dbReference type="InterPro" id="IPR019734">
    <property type="entry name" value="TPR_rpt"/>
</dbReference>
<dbReference type="InterPro" id="IPR051685">
    <property type="entry name" value="Ycf3/AcsC/BcsC/TPR_MFPF"/>
</dbReference>
<dbReference type="PANTHER" id="PTHR44943">
    <property type="entry name" value="CELLULOSE SYNTHASE OPERON PROTEIN C"/>
    <property type="match status" value="1"/>
</dbReference>
<dbReference type="PANTHER" id="PTHR44943:SF8">
    <property type="entry name" value="TPR REPEAT-CONTAINING PROTEIN MJ0263"/>
    <property type="match status" value="1"/>
</dbReference>
<dbReference type="Pfam" id="PF00211">
    <property type="entry name" value="Guanylate_cyc"/>
    <property type="match status" value="1"/>
</dbReference>
<dbReference type="Pfam" id="PF13424">
    <property type="entry name" value="TPR_12"/>
    <property type="match status" value="1"/>
</dbReference>
<dbReference type="Pfam" id="PF13432">
    <property type="entry name" value="TPR_16"/>
    <property type="match status" value="1"/>
</dbReference>
<dbReference type="SMART" id="SM00028">
    <property type="entry name" value="TPR"/>
    <property type="match status" value="4"/>
</dbReference>
<dbReference type="SUPFAM" id="SSF55073">
    <property type="entry name" value="Nucleotide cyclase"/>
    <property type="match status" value="1"/>
</dbReference>
<dbReference type="SUPFAM" id="SSF48452">
    <property type="entry name" value="TPR-like"/>
    <property type="match status" value="1"/>
</dbReference>
<dbReference type="PROSITE" id="PS50125">
    <property type="entry name" value="GUANYLATE_CYCLASE_2"/>
    <property type="match status" value="1"/>
</dbReference>
<dbReference type="PROSITE" id="PS50005">
    <property type="entry name" value="TPR"/>
    <property type="match status" value="4"/>
</dbReference>
<dbReference type="PROSITE" id="PS50293">
    <property type="entry name" value="TPR_REGION"/>
    <property type="match status" value="1"/>
</dbReference>
<sequence>MAKESIRRRLAAILAADAVGYSRLMERDEKSTHTLLMARWKEVLEPLVGIHQGRVFKRTGDGVLVEFGSAVNAVECAAALQQAMAAANRDLPEDRAIVLRVGVNLGDIMVEDSDLFGDGVNVAARIEALADPGGVAISDGIHEYVHGRTDIDFVDSGYHEVKNIERPVHIWTWSPKDRAREPPNIAAEPPPQLPAKPSIAVLPFDNMSGDPEQGYFADGITEDIITDLSKVSGLFVIARNSSFAYKGKTPDIRKVSRELGVRYVLEGSVRRAANRIRINAQMIDGTTGGHLWAERYDRGLEDIFAVQDEVTRTIVNALRVKLTAGEEERRESRGKVDPEAYDLLVRSRQAILQFNALSSMEARRMLHRVLEIDPGMAAAHASLSIIALTDFINQWNGATPDNLTQALGLAQEAIDTDGSEPQGHYTLALALSWMRRLDEAEHAAERAIELDPNSANAYTALGTIRDFQGRHEEALALYTRAHRLDPQFDLSLHFQGRALLNLGRFDEAEVAFKRRLLLAPRSDMTRFYLACLYGRTGRHEEARGYWREVLGVNPSFSVDHLRRSLPYQDPHLMDRLVEGLREAGVSI</sequence>
<geneLocation type="plasmid">
    <name>pSymA</name>
    <name>megaplasmid 1</name>
</geneLocation>
<name>CYA3_RHIME</name>
<accession>Q9Z3Q0</accession>
<evidence type="ECO:0000255" key="1">
    <source>
        <dbReference type="PROSITE-ProRule" id="PRU00099"/>
    </source>
</evidence>
<evidence type="ECO:0000305" key="2"/>
<keyword id="KW-0067">ATP-binding</keyword>
<keyword id="KW-0115">cAMP biosynthesis</keyword>
<keyword id="KW-0456">Lyase</keyword>
<keyword id="KW-0547">Nucleotide-binding</keyword>
<keyword id="KW-0614">Plasmid</keyword>
<keyword id="KW-1185">Reference proteome</keyword>
<keyword id="KW-0677">Repeat</keyword>
<keyword id="KW-0802">TPR repeat</keyword>
<feature type="chain" id="PRO_0000195746" description="Putative adenylate cyclase 3">
    <location>
        <begin position="1"/>
        <end position="587"/>
    </location>
</feature>
<feature type="domain" description="Guanylate cyclase" evidence="1">
    <location>
        <begin position="12"/>
        <end position="127"/>
    </location>
</feature>
<feature type="repeat" description="TPR 1">
    <location>
        <begin position="343"/>
        <end position="376"/>
    </location>
</feature>
<feature type="repeat" description="TPR 2">
    <location>
        <begin position="421"/>
        <end position="454"/>
    </location>
</feature>
<feature type="repeat" description="TPR 3">
    <location>
        <begin position="455"/>
        <end position="488"/>
    </location>
</feature>
<feature type="repeat" description="TPR 4">
    <location>
        <begin position="490"/>
        <end position="522"/>
    </location>
</feature>
<feature type="repeat" description="TPR 5">
    <location>
        <begin position="524"/>
        <end position="556"/>
    </location>
</feature>
<feature type="sequence conflict" description="In Ref. 1; CAB38103." evidence="2" ref="1">
    <original>A</original>
    <variation>T</variation>
    <location>
        <position position="18"/>
    </location>
</feature>
<feature type="sequence conflict" description="In Ref. 1; CAB38103." evidence="2" ref="1">
    <original>R</original>
    <variation>H</variation>
    <location>
        <position position="178"/>
    </location>
</feature>
<feature type="sequence conflict" description="In Ref. 1; CAB38103." evidence="2" ref="1">
    <original>P</original>
    <variation>L</variation>
    <location>
        <position position="183"/>
    </location>
</feature>
<feature type="sequence conflict" description="In Ref. 1; CAB38103." evidence="2" ref="1">
    <original>KP</original>
    <variation>S</variation>
    <location>
        <begin position="196"/>
        <end position="197"/>
    </location>
</feature>
<feature type="sequence conflict" description="In Ref. 1; CAB38103." evidence="2" ref="1">
    <original>D</original>
    <variation>N</variation>
    <location>
        <position position="251"/>
    </location>
</feature>
<feature type="sequence conflict" description="In Ref. 1; CAB38103." evidence="2" ref="1">
    <original>N</original>
    <variation>D</variation>
    <location>
        <position position="553"/>
    </location>
</feature>
<organism>
    <name type="scientific">Rhizobium meliloti (strain 1021)</name>
    <name type="common">Ensifer meliloti</name>
    <name type="synonym">Sinorhizobium meliloti</name>
    <dbReference type="NCBI Taxonomy" id="266834"/>
    <lineage>
        <taxon>Bacteria</taxon>
        <taxon>Pseudomonadati</taxon>
        <taxon>Pseudomonadota</taxon>
        <taxon>Alphaproteobacteria</taxon>
        <taxon>Hyphomicrobiales</taxon>
        <taxon>Rhizobiaceae</taxon>
        <taxon>Sinorhizobium/Ensifer group</taxon>
        <taxon>Sinorhizobium</taxon>
    </lineage>
</organism>
<protein>
    <recommendedName>
        <fullName>Putative adenylate cyclase 3</fullName>
        <ecNumber>4.6.1.1</ecNumber>
    </recommendedName>
    <alternativeName>
        <fullName>ATP pyrophosphate-lyase 3</fullName>
    </alternativeName>
    <alternativeName>
        <fullName>Adenylyl cyclase 3</fullName>
    </alternativeName>
</protein>